<keyword id="KW-0963">Cytoplasm</keyword>
<keyword id="KW-0342">GTP-binding</keyword>
<keyword id="KW-0396">Initiation factor</keyword>
<keyword id="KW-0547">Nucleotide-binding</keyword>
<keyword id="KW-0648">Protein biosynthesis</keyword>
<dbReference type="EMBL" id="CP000848">
    <property type="protein sequence ID" value="ABV76419.1"/>
    <property type="molecule type" value="Genomic_DNA"/>
</dbReference>
<dbReference type="RefSeq" id="WP_012150992.1">
    <property type="nucleotide sequence ID" value="NZ_CP121767.1"/>
</dbReference>
<dbReference type="SMR" id="A8GSP4"/>
<dbReference type="GeneID" id="79937525"/>
<dbReference type="KEGG" id="rri:A1G_04595"/>
<dbReference type="HOGENOM" id="CLU_006301_10_2_5"/>
<dbReference type="Proteomes" id="UP000006832">
    <property type="component" value="Chromosome"/>
</dbReference>
<dbReference type="GO" id="GO:0005737">
    <property type="term" value="C:cytoplasm"/>
    <property type="evidence" value="ECO:0007669"/>
    <property type="project" value="UniProtKB-SubCell"/>
</dbReference>
<dbReference type="GO" id="GO:0005525">
    <property type="term" value="F:GTP binding"/>
    <property type="evidence" value="ECO:0007669"/>
    <property type="project" value="UniProtKB-KW"/>
</dbReference>
<dbReference type="GO" id="GO:0003924">
    <property type="term" value="F:GTPase activity"/>
    <property type="evidence" value="ECO:0007669"/>
    <property type="project" value="UniProtKB-UniRule"/>
</dbReference>
<dbReference type="GO" id="GO:0097216">
    <property type="term" value="F:guanosine tetraphosphate binding"/>
    <property type="evidence" value="ECO:0007669"/>
    <property type="project" value="UniProtKB-ARBA"/>
</dbReference>
<dbReference type="GO" id="GO:0003743">
    <property type="term" value="F:translation initiation factor activity"/>
    <property type="evidence" value="ECO:0007669"/>
    <property type="project" value="UniProtKB-UniRule"/>
</dbReference>
<dbReference type="CDD" id="cd01887">
    <property type="entry name" value="IF2_eIF5B"/>
    <property type="match status" value="1"/>
</dbReference>
<dbReference type="CDD" id="cd03702">
    <property type="entry name" value="IF2_mtIF2_II"/>
    <property type="match status" value="1"/>
</dbReference>
<dbReference type="CDD" id="cd03692">
    <property type="entry name" value="mtIF2_IVc"/>
    <property type="match status" value="1"/>
</dbReference>
<dbReference type="FunFam" id="2.40.30.10:FF:000008">
    <property type="entry name" value="Translation initiation factor IF-2"/>
    <property type="match status" value="1"/>
</dbReference>
<dbReference type="FunFam" id="2.40.30.10:FF:000054">
    <property type="entry name" value="Translation initiation factor IF-2"/>
    <property type="match status" value="1"/>
</dbReference>
<dbReference type="FunFam" id="3.40.50.10050:FF:000001">
    <property type="entry name" value="Translation initiation factor IF-2"/>
    <property type="match status" value="1"/>
</dbReference>
<dbReference type="FunFam" id="3.40.50.300:FF:000019">
    <property type="entry name" value="Translation initiation factor IF-2"/>
    <property type="match status" value="1"/>
</dbReference>
<dbReference type="Gene3D" id="3.40.50.300">
    <property type="entry name" value="P-loop containing nucleotide triphosphate hydrolases"/>
    <property type="match status" value="1"/>
</dbReference>
<dbReference type="Gene3D" id="2.40.30.10">
    <property type="entry name" value="Translation factors"/>
    <property type="match status" value="2"/>
</dbReference>
<dbReference type="Gene3D" id="3.40.50.10050">
    <property type="entry name" value="Translation initiation factor IF- 2, domain 3"/>
    <property type="match status" value="1"/>
</dbReference>
<dbReference type="HAMAP" id="MF_00100_B">
    <property type="entry name" value="IF_2_B"/>
    <property type="match status" value="1"/>
</dbReference>
<dbReference type="InterPro" id="IPR053905">
    <property type="entry name" value="EF-G-like_DII"/>
</dbReference>
<dbReference type="InterPro" id="IPR004161">
    <property type="entry name" value="EFTu-like_2"/>
</dbReference>
<dbReference type="InterPro" id="IPR044145">
    <property type="entry name" value="IF2_II"/>
</dbReference>
<dbReference type="InterPro" id="IPR006847">
    <property type="entry name" value="IF2_N"/>
</dbReference>
<dbReference type="InterPro" id="IPR027417">
    <property type="entry name" value="P-loop_NTPase"/>
</dbReference>
<dbReference type="InterPro" id="IPR005225">
    <property type="entry name" value="Small_GTP-bd"/>
</dbReference>
<dbReference type="InterPro" id="IPR000795">
    <property type="entry name" value="T_Tr_GTP-bd_dom"/>
</dbReference>
<dbReference type="InterPro" id="IPR000178">
    <property type="entry name" value="TF_IF2_bacterial-like"/>
</dbReference>
<dbReference type="InterPro" id="IPR015760">
    <property type="entry name" value="TIF_IF2"/>
</dbReference>
<dbReference type="InterPro" id="IPR023115">
    <property type="entry name" value="TIF_IF2_dom3"/>
</dbReference>
<dbReference type="InterPro" id="IPR036925">
    <property type="entry name" value="TIF_IF2_dom3_sf"/>
</dbReference>
<dbReference type="InterPro" id="IPR009000">
    <property type="entry name" value="Transl_B-barrel_sf"/>
</dbReference>
<dbReference type="NCBIfam" id="TIGR00487">
    <property type="entry name" value="IF-2"/>
    <property type="match status" value="1"/>
</dbReference>
<dbReference type="NCBIfam" id="TIGR00231">
    <property type="entry name" value="small_GTP"/>
    <property type="match status" value="1"/>
</dbReference>
<dbReference type="PANTHER" id="PTHR43381:SF5">
    <property type="entry name" value="TR-TYPE G DOMAIN-CONTAINING PROTEIN"/>
    <property type="match status" value="1"/>
</dbReference>
<dbReference type="PANTHER" id="PTHR43381">
    <property type="entry name" value="TRANSLATION INITIATION FACTOR IF-2-RELATED"/>
    <property type="match status" value="1"/>
</dbReference>
<dbReference type="Pfam" id="PF22042">
    <property type="entry name" value="EF-G_D2"/>
    <property type="match status" value="1"/>
</dbReference>
<dbReference type="Pfam" id="PF00009">
    <property type="entry name" value="GTP_EFTU"/>
    <property type="match status" value="1"/>
</dbReference>
<dbReference type="Pfam" id="PF03144">
    <property type="entry name" value="GTP_EFTU_D2"/>
    <property type="match status" value="1"/>
</dbReference>
<dbReference type="Pfam" id="PF11987">
    <property type="entry name" value="IF-2"/>
    <property type="match status" value="1"/>
</dbReference>
<dbReference type="Pfam" id="PF04760">
    <property type="entry name" value="IF2_N"/>
    <property type="match status" value="1"/>
</dbReference>
<dbReference type="SUPFAM" id="SSF52156">
    <property type="entry name" value="Initiation factor IF2/eIF5b, domain 3"/>
    <property type="match status" value="1"/>
</dbReference>
<dbReference type="SUPFAM" id="SSF52540">
    <property type="entry name" value="P-loop containing nucleoside triphosphate hydrolases"/>
    <property type="match status" value="1"/>
</dbReference>
<dbReference type="SUPFAM" id="SSF50447">
    <property type="entry name" value="Translation proteins"/>
    <property type="match status" value="2"/>
</dbReference>
<dbReference type="PROSITE" id="PS51722">
    <property type="entry name" value="G_TR_2"/>
    <property type="match status" value="1"/>
</dbReference>
<dbReference type="PROSITE" id="PS01176">
    <property type="entry name" value="IF2"/>
    <property type="match status" value="1"/>
</dbReference>
<name>IF2_RICRS</name>
<accession>A8GSP4</accession>
<gene>
    <name evidence="2" type="primary">infB</name>
    <name type="ordered locus">A1G_04595</name>
</gene>
<protein>
    <recommendedName>
        <fullName evidence="2">Translation initiation factor IF-2</fullName>
    </recommendedName>
</protein>
<proteinExistence type="inferred from homology"/>
<sequence>MTDNQEIKPKKLTLGNSKLSLNKSFDSLTGAQSFVNAKSKTLVEVRKSSTGSATTLSLNKERNSLDQTVIDANKEEFNRRLSILKKAAEQSQLNDPSKISTLSKLASINQSANSKIEPLETDKEVEQKQQNTEDNKVEVSAKIVQDDKDIPSQIPKKKEETFVKSPLVGMRTRYGIESEKELDKTADSKIIAPKIKLEEPKKIKKADLFNMLSDDESGSCRTRSLASIKRAREKEKRKLASQAPEKVYREVTIPEVIGVGDLANAMSERVADVIKELMKLGILANASQTIDADTAELVATNLGHTVKRVQESDVENVLISDDKVEDLRTRAPVVTVMGHVDHGKTSLLDALKSTDVAAGELGGITQHIGAYRVTLADGRAITFIDTPGHEAFSEMRSRGAKVTDIVIIVVAADDGIKTQTVEAINHAKAAGVPIIVAINKIDKPDIDIERVKNELYVHEIIGEEVGGDVMIIPISALKKINLDKLEEAILLIAEMQDLKANPFGSAAGVVIESKIEQGRGTLTTILVQRGTLRNSDIIIAGTAYGKVKKMTNDKGLEIVEATPSVPVEIQGLNEVPFAGDKFNIVQNEKQAKDIAEYRMRLAKEKKISIAPRSSLEDLFLKASGNSKIKELPLIIKGDVQGSVEAISGSLLKLPSDEIKLRILHSGVGPITESDVSLAHASSAIIVSFNVRAGANALTAAEKEKVDIRYYSIIYHLIDDIKAIMSGMLEPIVREQYIGSAEIRQIFNITKVGKIAGSYVTKGIIKKGAGVRLLRDNVVIHEGKLKTLKRFKDEVKEVREGYECGIAFENYEDIREGDTVEVFELIQEQRQL</sequence>
<reference key="1">
    <citation type="submission" date="2007-09" db="EMBL/GenBank/DDBJ databases">
        <title>Complete genome sequence of Rickettsia rickettsii.</title>
        <authorList>
            <person name="Madan A."/>
            <person name="Fahey J."/>
            <person name="Helton E."/>
            <person name="Ketteman M."/>
            <person name="Madan A."/>
            <person name="Rodrigues S."/>
            <person name="Sanchez A."/>
            <person name="Dasch G."/>
            <person name="Eremeeva M."/>
        </authorList>
    </citation>
    <scope>NUCLEOTIDE SEQUENCE [LARGE SCALE GENOMIC DNA]</scope>
    <source>
        <strain>Sheila Smith</strain>
    </source>
</reference>
<comment type="function">
    <text evidence="2">One of the essential components for the initiation of protein synthesis. Protects formylmethionyl-tRNA from spontaneous hydrolysis and promotes its binding to the 30S ribosomal subunits. Also involved in the hydrolysis of GTP during the formation of the 70S ribosomal complex.</text>
</comment>
<comment type="subcellular location">
    <subcellularLocation>
        <location evidence="2">Cytoplasm</location>
    </subcellularLocation>
</comment>
<comment type="similarity">
    <text evidence="2">Belongs to the TRAFAC class translation factor GTPase superfamily. Classic translation factor GTPase family. IF-2 subfamily.</text>
</comment>
<feature type="chain" id="PRO_1000008324" description="Translation initiation factor IF-2">
    <location>
        <begin position="1"/>
        <end position="831"/>
    </location>
</feature>
<feature type="domain" description="tr-type G">
    <location>
        <begin position="329"/>
        <end position="499"/>
    </location>
</feature>
<feature type="region of interest" description="G1" evidence="1">
    <location>
        <begin position="338"/>
        <end position="345"/>
    </location>
</feature>
<feature type="region of interest" description="G2" evidence="1">
    <location>
        <begin position="363"/>
        <end position="367"/>
    </location>
</feature>
<feature type="region of interest" description="G3" evidence="1">
    <location>
        <begin position="385"/>
        <end position="388"/>
    </location>
</feature>
<feature type="region of interest" description="G4" evidence="1">
    <location>
        <begin position="439"/>
        <end position="442"/>
    </location>
</feature>
<feature type="region of interest" description="G5" evidence="1">
    <location>
        <begin position="475"/>
        <end position="477"/>
    </location>
</feature>
<feature type="binding site" evidence="2">
    <location>
        <begin position="338"/>
        <end position="345"/>
    </location>
    <ligand>
        <name>GTP</name>
        <dbReference type="ChEBI" id="CHEBI:37565"/>
    </ligand>
</feature>
<feature type="binding site" evidence="2">
    <location>
        <begin position="385"/>
        <end position="389"/>
    </location>
    <ligand>
        <name>GTP</name>
        <dbReference type="ChEBI" id="CHEBI:37565"/>
    </ligand>
</feature>
<feature type="binding site" evidence="2">
    <location>
        <begin position="439"/>
        <end position="442"/>
    </location>
    <ligand>
        <name>GTP</name>
        <dbReference type="ChEBI" id="CHEBI:37565"/>
    </ligand>
</feature>
<organism>
    <name type="scientific">Rickettsia rickettsii (strain Sheila Smith)</name>
    <dbReference type="NCBI Taxonomy" id="392021"/>
    <lineage>
        <taxon>Bacteria</taxon>
        <taxon>Pseudomonadati</taxon>
        <taxon>Pseudomonadota</taxon>
        <taxon>Alphaproteobacteria</taxon>
        <taxon>Rickettsiales</taxon>
        <taxon>Rickettsiaceae</taxon>
        <taxon>Rickettsieae</taxon>
        <taxon>Rickettsia</taxon>
        <taxon>spotted fever group</taxon>
    </lineage>
</organism>
<evidence type="ECO:0000250" key="1"/>
<evidence type="ECO:0000255" key="2">
    <source>
        <dbReference type="HAMAP-Rule" id="MF_00100"/>
    </source>
</evidence>